<dbReference type="EMBL" id="CR626927">
    <property type="protein sequence ID" value="CAH09701.1"/>
    <property type="molecule type" value="Genomic_DNA"/>
</dbReference>
<dbReference type="RefSeq" id="WP_005782152.1">
    <property type="nucleotide sequence ID" value="NZ_UFTH01000001.1"/>
</dbReference>
<dbReference type="SMR" id="Q5L887"/>
<dbReference type="PaxDb" id="272559-BF9343_3920"/>
<dbReference type="GeneID" id="93114649"/>
<dbReference type="KEGG" id="bfs:BF9343_3920"/>
<dbReference type="eggNOG" id="COG0828">
    <property type="taxonomic scope" value="Bacteria"/>
</dbReference>
<dbReference type="HOGENOM" id="CLU_159258_2_0_10"/>
<dbReference type="Proteomes" id="UP000006731">
    <property type="component" value="Chromosome"/>
</dbReference>
<dbReference type="GO" id="GO:1990904">
    <property type="term" value="C:ribonucleoprotein complex"/>
    <property type="evidence" value="ECO:0007669"/>
    <property type="project" value="UniProtKB-KW"/>
</dbReference>
<dbReference type="GO" id="GO:0005840">
    <property type="term" value="C:ribosome"/>
    <property type="evidence" value="ECO:0007669"/>
    <property type="project" value="UniProtKB-KW"/>
</dbReference>
<dbReference type="GO" id="GO:0003735">
    <property type="term" value="F:structural constituent of ribosome"/>
    <property type="evidence" value="ECO:0007669"/>
    <property type="project" value="InterPro"/>
</dbReference>
<dbReference type="GO" id="GO:0006412">
    <property type="term" value="P:translation"/>
    <property type="evidence" value="ECO:0007669"/>
    <property type="project" value="UniProtKB-UniRule"/>
</dbReference>
<dbReference type="Gene3D" id="1.20.5.1150">
    <property type="entry name" value="Ribosomal protein S8"/>
    <property type="match status" value="1"/>
</dbReference>
<dbReference type="HAMAP" id="MF_00358">
    <property type="entry name" value="Ribosomal_bS21"/>
    <property type="match status" value="1"/>
</dbReference>
<dbReference type="InterPro" id="IPR001911">
    <property type="entry name" value="Ribosomal_bS21"/>
</dbReference>
<dbReference type="InterPro" id="IPR038380">
    <property type="entry name" value="Ribosomal_bS21_sf"/>
</dbReference>
<dbReference type="NCBIfam" id="TIGR00030">
    <property type="entry name" value="S21p"/>
    <property type="match status" value="1"/>
</dbReference>
<dbReference type="Pfam" id="PF01165">
    <property type="entry name" value="Ribosomal_S21"/>
    <property type="match status" value="1"/>
</dbReference>
<dbReference type="PRINTS" id="PR00976">
    <property type="entry name" value="RIBOSOMALS21"/>
</dbReference>
<protein>
    <recommendedName>
        <fullName evidence="1">Small ribosomal subunit protein bS21</fullName>
    </recommendedName>
    <alternativeName>
        <fullName evidence="2">30S ribosomal protein S21</fullName>
    </alternativeName>
</protein>
<evidence type="ECO:0000255" key="1">
    <source>
        <dbReference type="HAMAP-Rule" id="MF_00358"/>
    </source>
</evidence>
<evidence type="ECO:0000305" key="2"/>
<proteinExistence type="inferred from homology"/>
<gene>
    <name evidence="1" type="primary">rpsU</name>
    <name type="ordered locus">BF4025</name>
</gene>
<keyword id="KW-0687">Ribonucleoprotein</keyword>
<keyword id="KW-0689">Ribosomal protein</keyword>
<comment type="similarity">
    <text evidence="1">Belongs to the bacterial ribosomal protein bS21 family.</text>
</comment>
<reference key="1">
    <citation type="journal article" date="2005" name="Science">
        <title>Extensive DNA inversions in the B. fragilis genome control variable gene expression.</title>
        <authorList>
            <person name="Cerdeno-Tarraga A.-M."/>
            <person name="Patrick S."/>
            <person name="Crossman L.C."/>
            <person name="Blakely G."/>
            <person name="Abratt V."/>
            <person name="Lennard N."/>
            <person name="Poxton I."/>
            <person name="Duerden B."/>
            <person name="Harris B."/>
            <person name="Quail M.A."/>
            <person name="Barron A."/>
            <person name="Clark L."/>
            <person name="Corton C."/>
            <person name="Doggett J."/>
            <person name="Holden M.T.G."/>
            <person name="Larke N."/>
            <person name="Line A."/>
            <person name="Lord A."/>
            <person name="Norbertczak H."/>
            <person name="Ormond D."/>
            <person name="Price C."/>
            <person name="Rabbinowitsch E."/>
            <person name="Woodward J."/>
            <person name="Barrell B.G."/>
            <person name="Parkhill J."/>
        </authorList>
    </citation>
    <scope>NUCLEOTIDE SEQUENCE [LARGE SCALE GENOMIC DNA]</scope>
    <source>
        <strain>ATCC 25285 / DSM 2151 / CCUG 4856 / JCM 11019 / LMG 10263 / NCTC 9343 / Onslow / VPI 2553 / EN-2</strain>
    </source>
</reference>
<organism>
    <name type="scientific">Bacteroides fragilis (strain ATCC 25285 / DSM 2151 / CCUG 4856 / JCM 11019 / LMG 10263 / NCTC 9343 / Onslow / VPI 2553 / EN-2)</name>
    <dbReference type="NCBI Taxonomy" id="272559"/>
    <lineage>
        <taxon>Bacteria</taxon>
        <taxon>Pseudomonadati</taxon>
        <taxon>Bacteroidota</taxon>
        <taxon>Bacteroidia</taxon>
        <taxon>Bacteroidales</taxon>
        <taxon>Bacteroidaceae</taxon>
        <taxon>Bacteroides</taxon>
    </lineage>
</organism>
<accession>Q5L887</accession>
<name>RS21_BACFN</name>
<sequence>MIVVPVKEGENIEKALKKFKRKFEKTGIVKELRSRQQFDKPSVTKRLKKERAVYVQKLQQVED</sequence>
<feature type="chain" id="PRO_0000266627" description="Small ribosomal subunit protein bS21">
    <location>
        <begin position="1"/>
        <end position="63"/>
    </location>
</feature>